<organism>
    <name type="scientific">Thermobifida fusca (strain YX)</name>
    <dbReference type="NCBI Taxonomy" id="269800"/>
    <lineage>
        <taxon>Bacteria</taxon>
        <taxon>Bacillati</taxon>
        <taxon>Actinomycetota</taxon>
        <taxon>Actinomycetes</taxon>
        <taxon>Streptosporangiales</taxon>
        <taxon>Nocardiopsidaceae</taxon>
        <taxon>Thermobifida</taxon>
    </lineage>
</organism>
<evidence type="ECO:0000255" key="1">
    <source>
        <dbReference type="HAMAP-Rule" id="MF_00003"/>
    </source>
</evidence>
<evidence type="ECO:0000256" key="2">
    <source>
        <dbReference type="SAM" id="MobiDB-lite"/>
    </source>
</evidence>
<accession>Q47RU9</accession>
<dbReference type="EMBL" id="CP000088">
    <property type="protein sequence ID" value="AAZ54818.1"/>
    <property type="molecule type" value="Genomic_DNA"/>
</dbReference>
<dbReference type="RefSeq" id="WP_011291227.1">
    <property type="nucleotide sequence ID" value="NC_007333.1"/>
</dbReference>
<dbReference type="SMR" id="Q47RU9"/>
<dbReference type="STRING" id="269800.Tfu_0780"/>
<dbReference type="KEGG" id="tfu:Tfu_0780"/>
<dbReference type="eggNOG" id="COG0858">
    <property type="taxonomic scope" value="Bacteria"/>
</dbReference>
<dbReference type="HOGENOM" id="CLU_089475_0_0_11"/>
<dbReference type="OrthoDB" id="307788at2"/>
<dbReference type="GO" id="GO:0005829">
    <property type="term" value="C:cytosol"/>
    <property type="evidence" value="ECO:0007669"/>
    <property type="project" value="TreeGrafter"/>
</dbReference>
<dbReference type="GO" id="GO:0043024">
    <property type="term" value="F:ribosomal small subunit binding"/>
    <property type="evidence" value="ECO:0007669"/>
    <property type="project" value="TreeGrafter"/>
</dbReference>
<dbReference type="GO" id="GO:0030490">
    <property type="term" value="P:maturation of SSU-rRNA"/>
    <property type="evidence" value="ECO:0007669"/>
    <property type="project" value="UniProtKB-UniRule"/>
</dbReference>
<dbReference type="Gene3D" id="3.30.300.20">
    <property type="match status" value="1"/>
</dbReference>
<dbReference type="HAMAP" id="MF_00003">
    <property type="entry name" value="RbfA"/>
    <property type="match status" value="1"/>
</dbReference>
<dbReference type="InterPro" id="IPR015946">
    <property type="entry name" value="KH_dom-like_a/b"/>
</dbReference>
<dbReference type="InterPro" id="IPR000238">
    <property type="entry name" value="RbfA"/>
</dbReference>
<dbReference type="InterPro" id="IPR023799">
    <property type="entry name" value="RbfA_dom_sf"/>
</dbReference>
<dbReference type="InterPro" id="IPR020053">
    <property type="entry name" value="Ribosome-bd_factorA_CS"/>
</dbReference>
<dbReference type="NCBIfam" id="TIGR00082">
    <property type="entry name" value="rbfA"/>
    <property type="match status" value="1"/>
</dbReference>
<dbReference type="PANTHER" id="PTHR33515">
    <property type="entry name" value="RIBOSOME-BINDING FACTOR A, CHLOROPLASTIC-RELATED"/>
    <property type="match status" value="1"/>
</dbReference>
<dbReference type="PANTHER" id="PTHR33515:SF1">
    <property type="entry name" value="RIBOSOME-BINDING FACTOR A, CHLOROPLASTIC-RELATED"/>
    <property type="match status" value="1"/>
</dbReference>
<dbReference type="Pfam" id="PF02033">
    <property type="entry name" value="RBFA"/>
    <property type="match status" value="1"/>
</dbReference>
<dbReference type="SUPFAM" id="SSF89919">
    <property type="entry name" value="Ribosome-binding factor A, RbfA"/>
    <property type="match status" value="1"/>
</dbReference>
<dbReference type="PROSITE" id="PS01319">
    <property type="entry name" value="RBFA"/>
    <property type="match status" value="1"/>
</dbReference>
<proteinExistence type="inferred from homology"/>
<protein>
    <recommendedName>
        <fullName evidence="1">Ribosome-binding factor A</fullName>
    </recommendedName>
</protein>
<name>RBFA_THEFY</name>
<comment type="function">
    <text evidence="1">One of several proteins that assist in the late maturation steps of the functional core of the 30S ribosomal subunit. Associates with free 30S ribosomal subunits (but not with 30S subunits that are part of 70S ribosomes or polysomes). Required for efficient processing of 16S rRNA. May interact with the 5'-terminal helix region of 16S rRNA.</text>
</comment>
<comment type="subunit">
    <text evidence="1">Monomer. Binds 30S ribosomal subunits, but not 50S ribosomal subunits or 70S ribosomes.</text>
</comment>
<comment type="subcellular location">
    <subcellularLocation>
        <location evidence="1">Cytoplasm</location>
    </subcellularLocation>
</comment>
<comment type="similarity">
    <text evidence="1">Belongs to the RbfA family.</text>
</comment>
<gene>
    <name evidence="1" type="primary">rbfA</name>
    <name type="ordered locus">Tfu_0780</name>
</gene>
<keyword id="KW-0963">Cytoplasm</keyword>
<keyword id="KW-0690">Ribosome biogenesis</keyword>
<reference key="1">
    <citation type="journal article" date="2007" name="J. Bacteriol.">
        <title>Genome sequence and analysis of the soil cellulolytic actinomycete Thermobifida fusca YX.</title>
        <authorList>
            <person name="Lykidis A."/>
            <person name="Mavromatis K."/>
            <person name="Ivanova N."/>
            <person name="Anderson I."/>
            <person name="Land M."/>
            <person name="DiBartolo G."/>
            <person name="Martinez M."/>
            <person name="Lapidus A."/>
            <person name="Lucas S."/>
            <person name="Copeland A."/>
            <person name="Richardson P."/>
            <person name="Wilson D.B."/>
            <person name="Kyrpides N."/>
        </authorList>
    </citation>
    <scope>NUCLEOTIDE SEQUENCE [LARGE SCALE GENOMIC DNA]</scope>
    <source>
        <strain>YX</strain>
    </source>
</reference>
<sequence length="151" mass="16615">MVDAARASKLADRIQRIVAEMLERRIKDPRLGFVTVTDARLTNDLRDATVYYTVFGSDAEKAATAAALESAKGLIRSEVGRRTGLRHTPTITFVIDEVPDNARHIEELLAKAKQADAEVARAAANARPAGDPDPYREPRPADDDDEDDEDE</sequence>
<feature type="chain" id="PRO_1000000239" description="Ribosome-binding factor A">
    <location>
        <begin position="1"/>
        <end position="151"/>
    </location>
</feature>
<feature type="region of interest" description="Disordered" evidence="2">
    <location>
        <begin position="116"/>
        <end position="151"/>
    </location>
</feature>
<feature type="compositionally biased region" description="Low complexity" evidence="2">
    <location>
        <begin position="120"/>
        <end position="129"/>
    </location>
</feature>
<feature type="compositionally biased region" description="Acidic residues" evidence="2">
    <location>
        <begin position="142"/>
        <end position="151"/>
    </location>
</feature>